<name>ERB46_MAIZE</name>
<gene>
    <name evidence="6" type="primary">EREB46</name>
    <name evidence="5" type="synonym">WIN1</name>
    <name evidence="8" type="ORF">ZEAMMB73_Zm00001d015759</name>
    <name evidence="9" type="ORF">Zm00014a_004797</name>
</gene>
<keyword id="KW-0938">Abscisic acid signaling pathway</keyword>
<keyword id="KW-0010">Activator</keyword>
<keyword id="KW-0238">DNA-binding</keyword>
<keyword id="KW-0936">Ethylene signaling pathway</keyword>
<keyword id="KW-0539">Nucleus</keyword>
<keyword id="KW-1185">Reference proteome</keyword>
<keyword id="KW-0346">Stress response</keyword>
<keyword id="KW-0804">Transcription</keyword>
<keyword id="KW-0805">Transcription regulation</keyword>
<reference key="1">
    <citation type="journal article" date="2014" name="Plant J.">
        <title>The Maize TFome--development of a transcription factor open reading frame collection for functional genomics.</title>
        <authorList>
            <person name="Burdo B."/>
            <person name="Gray J."/>
            <person name="Goetting-Minesky M.P."/>
            <person name="Wittler B."/>
            <person name="Hunt M."/>
            <person name="Li T."/>
            <person name="Velliquette D."/>
            <person name="Thomas J."/>
            <person name="Gentzel I."/>
            <person name="dos Santos Brito M."/>
            <person name="Mejia-Guerra M.K."/>
            <person name="Connolly L.N."/>
            <person name="Qaisi D."/>
            <person name="Li W."/>
            <person name="Casas M.I."/>
            <person name="Doseff A.I."/>
            <person name="Grotewold E."/>
        </authorList>
    </citation>
    <scope>NUCLEOTIDE SEQUENCE [MRNA]</scope>
    <scope>GENE FAMILY</scope>
    <source>
        <strain>cv. B73</strain>
    </source>
</reference>
<reference key="2">
    <citation type="journal article" date="2009" name="Science">
        <title>The B73 maize genome: complexity, diversity, and dynamics.</title>
        <authorList>
            <person name="Schnable P.S."/>
            <person name="Ware D."/>
            <person name="Fulton R.S."/>
            <person name="Stein J.C."/>
            <person name="Wei F."/>
            <person name="Pasternak S."/>
            <person name="Liang C."/>
            <person name="Zhang J."/>
            <person name="Fulton L."/>
            <person name="Graves T.A."/>
            <person name="Minx P."/>
            <person name="Reily A.D."/>
            <person name="Courtney L."/>
            <person name="Kruchowski S.S."/>
            <person name="Tomlinson C."/>
            <person name="Strong C."/>
            <person name="Delehaunty K."/>
            <person name="Fronick C."/>
            <person name="Courtney B."/>
            <person name="Rock S.M."/>
            <person name="Belter E."/>
            <person name="Du F."/>
            <person name="Kim K."/>
            <person name="Abbott R.M."/>
            <person name="Cotton M."/>
            <person name="Levy A."/>
            <person name="Marchetto P."/>
            <person name="Ochoa K."/>
            <person name="Jackson S.M."/>
            <person name="Gillam B."/>
            <person name="Chen W."/>
            <person name="Yan L."/>
            <person name="Higginbotham J."/>
            <person name="Cardenas M."/>
            <person name="Waligorski J."/>
            <person name="Applebaum E."/>
            <person name="Phelps L."/>
            <person name="Falcone J."/>
            <person name="Kanchi K."/>
            <person name="Thane T."/>
            <person name="Scimone A."/>
            <person name="Thane N."/>
            <person name="Henke J."/>
            <person name="Wang T."/>
            <person name="Ruppert J."/>
            <person name="Shah N."/>
            <person name="Rotter K."/>
            <person name="Hodges J."/>
            <person name="Ingenthron E."/>
            <person name="Cordes M."/>
            <person name="Kohlberg S."/>
            <person name="Sgro J."/>
            <person name="Delgado B."/>
            <person name="Mead K."/>
            <person name="Chinwalla A."/>
            <person name="Leonard S."/>
            <person name="Crouse K."/>
            <person name="Collura K."/>
            <person name="Kudrna D."/>
            <person name="Currie J."/>
            <person name="He R."/>
            <person name="Angelova A."/>
            <person name="Rajasekar S."/>
            <person name="Mueller T."/>
            <person name="Lomeli R."/>
            <person name="Scara G."/>
            <person name="Ko A."/>
            <person name="Delaney K."/>
            <person name="Wissotski M."/>
            <person name="Lopez G."/>
            <person name="Campos D."/>
            <person name="Braidotti M."/>
            <person name="Ashley E."/>
            <person name="Golser W."/>
            <person name="Kim H."/>
            <person name="Lee S."/>
            <person name="Lin J."/>
            <person name="Dujmic Z."/>
            <person name="Kim W."/>
            <person name="Talag J."/>
            <person name="Zuccolo A."/>
            <person name="Fan C."/>
            <person name="Sebastian A."/>
            <person name="Kramer M."/>
            <person name="Spiegel L."/>
            <person name="Nascimento L."/>
            <person name="Zutavern T."/>
            <person name="Miller B."/>
            <person name="Ambroise C."/>
            <person name="Muller S."/>
            <person name="Spooner W."/>
            <person name="Narechania A."/>
            <person name="Ren L."/>
            <person name="Wei S."/>
            <person name="Kumari S."/>
            <person name="Faga B."/>
            <person name="Levy M.J."/>
            <person name="McMahan L."/>
            <person name="Van Buren P."/>
            <person name="Vaughn M.W."/>
            <person name="Ying K."/>
            <person name="Yeh C.-T."/>
            <person name="Emrich S.J."/>
            <person name="Jia Y."/>
            <person name="Kalyanaraman A."/>
            <person name="Hsia A.-P."/>
            <person name="Barbazuk W.B."/>
            <person name="Baucom R.S."/>
            <person name="Brutnell T.P."/>
            <person name="Carpita N.C."/>
            <person name="Chaparro C."/>
            <person name="Chia J.-M."/>
            <person name="Deragon J.-M."/>
            <person name="Estill J.C."/>
            <person name="Fu Y."/>
            <person name="Jeddeloh J.A."/>
            <person name="Han Y."/>
            <person name="Lee H."/>
            <person name="Li P."/>
            <person name="Lisch D.R."/>
            <person name="Liu S."/>
            <person name="Liu Z."/>
            <person name="Nagel D.H."/>
            <person name="McCann M.C."/>
            <person name="SanMiguel P."/>
            <person name="Myers A.M."/>
            <person name="Nettleton D."/>
            <person name="Nguyen J."/>
            <person name="Penning B.W."/>
            <person name="Ponnala L."/>
            <person name="Schneider K.L."/>
            <person name="Schwartz D.C."/>
            <person name="Sharma A."/>
            <person name="Soderlund C."/>
            <person name="Springer N.M."/>
            <person name="Sun Q."/>
            <person name="Wang H."/>
            <person name="Waterman M."/>
            <person name="Westerman R."/>
            <person name="Wolfgruber T.K."/>
            <person name="Yang L."/>
            <person name="Yu Y."/>
            <person name="Zhang L."/>
            <person name="Zhou S."/>
            <person name="Zhu Q."/>
            <person name="Bennetzen J.L."/>
            <person name="Dawe R.K."/>
            <person name="Jiang J."/>
            <person name="Jiang N."/>
            <person name="Presting G.G."/>
            <person name="Wessler S.R."/>
            <person name="Aluru S."/>
            <person name="Martienssen R.A."/>
            <person name="Clifton S.W."/>
            <person name="McCombie W.R."/>
            <person name="Wing R.A."/>
            <person name="Wilson R.K."/>
        </authorList>
    </citation>
    <scope>NUCLEOTIDE SEQUENCE [LARGE SCALE GENOMIC DNA]</scope>
    <source>
        <strain>cv. B73</strain>
    </source>
</reference>
<reference key="3">
    <citation type="journal article" date="2018" name="Nat. Genet.">
        <title>Extensive intraspecific gene order and gene structural variations between Mo17 and other maize genomes.</title>
        <authorList>
            <person name="Sun S."/>
            <person name="Zhou Y."/>
            <person name="Chen J."/>
            <person name="Shi J."/>
            <person name="Zhao H."/>
            <person name="Zhao H."/>
            <person name="Song W."/>
            <person name="Zhang M."/>
            <person name="Cui Y."/>
            <person name="Dong X."/>
            <person name="Liu H."/>
            <person name="Ma X."/>
            <person name="Jiao Y."/>
            <person name="Wang B."/>
            <person name="Wei X."/>
            <person name="Stein J.C."/>
            <person name="Glaubitz J.C."/>
            <person name="Lu F."/>
            <person name="Yu G."/>
            <person name="Liang C."/>
            <person name="Fengler K."/>
            <person name="Li B."/>
            <person name="Rafalski A."/>
            <person name="Schnable P.S."/>
            <person name="Ware D.H."/>
            <person name="Buckler E.S."/>
            <person name="Lai J."/>
        </authorList>
    </citation>
    <scope>NUCLEOTIDE SEQUENCE [LARGE SCALE GENOMIC DNA]</scope>
    <source>
        <strain>cv. Missouri 17</strain>
        <tissue>Seedling</tissue>
    </source>
</reference>
<reference key="4">
    <citation type="journal article" date="2009" name="Plant Mol. Biol.">
        <title>Insights into corn genes derived from large-scale cDNA sequencing.</title>
        <authorList>
            <person name="Alexandrov N.N."/>
            <person name="Brover V.V."/>
            <person name="Freidin S."/>
            <person name="Troukhan M.E."/>
            <person name="Tatarinova T.V."/>
            <person name="Zhang H."/>
            <person name="Swaller T.J."/>
            <person name="Lu Y.-P."/>
            <person name="Bouck J."/>
            <person name="Flavell R.B."/>
            <person name="Feldmann K.A."/>
        </authorList>
    </citation>
    <scope>NUCLEOTIDE SEQUENCE [LARGE SCALE MRNA]</scope>
</reference>
<reference key="5">
    <citation type="journal article" date="2022" name="Plant Sci.">
        <title>ZmEREB46, a maize ortholog of Arabidopsis WAX INDUCER1/SHINE1, is involved in the biosynthesis of leaf epicuticular very-long-chain waxes and drought tolerance.</title>
        <authorList>
            <person name="Yang Y."/>
            <person name="Shi J."/>
            <person name="Chen L."/>
            <person name="Xiao W."/>
            <person name="Yu J."/>
        </authorList>
    </citation>
    <scope>FUNCTION</scope>
    <scope>DISRUPTION PHENOTYPE</scope>
    <scope>TISSUE SPECIFICITY</scope>
    <scope>INDUCTION BY DROUGHT; OSMOTIC STRESS AND ABSCISIC ACID</scope>
    <source>
        <strain>cv. LH244</strain>
    </source>
</reference>
<organism>
    <name type="scientific">Zea mays</name>
    <name type="common">Maize</name>
    <dbReference type="NCBI Taxonomy" id="4577"/>
    <lineage>
        <taxon>Eukaryota</taxon>
        <taxon>Viridiplantae</taxon>
        <taxon>Streptophyta</taxon>
        <taxon>Embryophyta</taxon>
        <taxon>Tracheophyta</taxon>
        <taxon>Spermatophyta</taxon>
        <taxon>Magnoliopsida</taxon>
        <taxon>Liliopsida</taxon>
        <taxon>Poales</taxon>
        <taxon>Poaceae</taxon>
        <taxon>PACMAD clade</taxon>
        <taxon>Panicoideae</taxon>
        <taxon>Andropogonodae</taxon>
        <taxon>Andropogoneae</taxon>
        <taxon>Tripsacinae</taxon>
        <taxon>Zea</taxon>
    </lineage>
</organism>
<accession>B6T5Z6</accession>
<accession>A0A3L6EMI4</accession>
<accession>A0A8J8XKM1</accession>
<feature type="chain" id="PRO_0000459248" description="Ethylene-responsive transcription factor WIN1">
    <location>
        <begin position="1"/>
        <end position="213"/>
    </location>
</feature>
<feature type="DNA-binding region" description="AP2/ERF" evidence="2">
    <location>
        <begin position="15"/>
        <end position="72"/>
    </location>
</feature>
<feature type="region of interest" description="Disordered" evidence="3">
    <location>
        <begin position="70"/>
        <end position="99"/>
    </location>
</feature>
<feature type="region of interest" description="Disordered" evidence="3">
    <location>
        <begin position="159"/>
        <end position="213"/>
    </location>
</feature>
<feature type="compositionally biased region" description="Polar residues" evidence="3">
    <location>
        <begin position="70"/>
        <end position="80"/>
    </location>
</feature>
<feature type="compositionally biased region" description="Low complexity" evidence="3">
    <location>
        <begin position="159"/>
        <end position="174"/>
    </location>
</feature>
<protein>
    <recommendedName>
        <fullName evidence="5">Ethylene-responsive transcription factor WIN1</fullName>
    </recommendedName>
    <alternativeName>
        <fullName evidence="6">Ethylene-responsive element-binding protein 46</fullName>
        <shortName evidence="7">AP2-EREBP transcription factor 46</shortName>
        <shortName evidence="6">ZmEREB46</shortName>
    </alternativeName>
</protein>
<dbReference type="EMBL" id="KJ727837">
    <property type="protein sequence ID" value="AIB05328.1"/>
    <property type="molecule type" value="mRNA"/>
</dbReference>
<dbReference type="EMBL" id="CM000781">
    <property type="protein sequence ID" value="AQK69487.1"/>
    <property type="molecule type" value="Genomic_DNA"/>
</dbReference>
<dbReference type="EMBL" id="NCVQ01000006">
    <property type="protein sequence ID" value="PWZ21889.1"/>
    <property type="molecule type" value="Genomic_DNA"/>
</dbReference>
<dbReference type="EMBL" id="EU960411">
    <property type="protein sequence ID" value="ACG32529.1"/>
    <property type="molecule type" value="mRNA"/>
</dbReference>
<dbReference type="RefSeq" id="NP_001148685.1">
    <property type="nucleotide sequence ID" value="NM_001155213.1"/>
</dbReference>
<dbReference type="SMR" id="B6T5Z6"/>
<dbReference type="FunCoup" id="B6T5Z6">
    <property type="interactions" value="3773"/>
</dbReference>
<dbReference type="STRING" id="4577.B6T5Z6"/>
<dbReference type="PaxDb" id="4577-GRMZM2G085678_P01"/>
<dbReference type="EnsemblPlants" id="Zm00001eb235640_T001">
    <property type="protein sequence ID" value="Zm00001eb235640_P001"/>
    <property type="gene ID" value="Zm00001eb235640"/>
</dbReference>
<dbReference type="GeneID" id="100282301"/>
<dbReference type="Gramene" id="Zm00001eb235640_T001">
    <property type="protein sequence ID" value="Zm00001eb235640_P001"/>
    <property type="gene ID" value="Zm00001eb235640"/>
</dbReference>
<dbReference type="KEGG" id="zma:100282301"/>
<dbReference type="eggNOG" id="ENOG502RXIC">
    <property type="taxonomic scope" value="Eukaryota"/>
</dbReference>
<dbReference type="HOGENOM" id="CLU_042594_3_0_1"/>
<dbReference type="InParanoid" id="B6T5Z6"/>
<dbReference type="OMA" id="TNFPVLT"/>
<dbReference type="OrthoDB" id="1920676at2759"/>
<dbReference type="Proteomes" id="UP000007305">
    <property type="component" value="Chromosome 5"/>
</dbReference>
<dbReference type="Proteomes" id="UP000251960">
    <property type="component" value="Chromosome 5"/>
</dbReference>
<dbReference type="ExpressionAtlas" id="B6T5Z6">
    <property type="expression patterns" value="baseline and differential"/>
</dbReference>
<dbReference type="GO" id="GO:0005634">
    <property type="term" value="C:nucleus"/>
    <property type="evidence" value="ECO:0007669"/>
    <property type="project" value="UniProtKB-SubCell"/>
</dbReference>
<dbReference type="GO" id="GO:0003700">
    <property type="term" value="F:DNA-binding transcription factor activity"/>
    <property type="evidence" value="ECO:0000314"/>
    <property type="project" value="UniProtKB"/>
</dbReference>
<dbReference type="GO" id="GO:0043565">
    <property type="term" value="F:sequence-specific DNA binding"/>
    <property type="evidence" value="ECO:0000314"/>
    <property type="project" value="UniProtKB"/>
</dbReference>
<dbReference type="GO" id="GO:0009738">
    <property type="term" value="P:abscisic acid-activated signaling pathway"/>
    <property type="evidence" value="ECO:0007669"/>
    <property type="project" value="UniProtKB-KW"/>
</dbReference>
<dbReference type="GO" id="GO:0042335">
    <property type="term" value="P:cuticle development"/>
    <property type="evidence" value="ECO:0000315"/>
    <property type="project" value="UniProtKB"/>
</dbReference>
<dbReference type="GO" id="GO:0009873">
    <property type="term" value="P:ethylene-activated signaling pathway"/>
    <property type="evidence" value="ECO:0007669"/>
    <property type="project" value="UniProtKB-KW"/>
</dbReference>
<dbReference type="GO" id="GO:0045893">
    <property type="term" value="P:positive regulation of DNA-templated transcription"/>
    <property type="evidence" value="ECO:0000314"/>
    <property type="project" value="UniProtKB"/>
</dbReference>
<dbReference type="GO" id="GO:1902584">
    <property type="term" value="P:positive regulation of response to water deprivation"/>
    <property type="evidence" value="ECO:0000315"/>
    <property type="project" value="UniProtKB"/>
</dbReference>
<dbReference type="GO" id="GO:1904278">
    <property type="term" value="P:positive regulation of wax biosynthetic process"/>
    <property type="evidence" value="ECO:0000315"/>
    <property type="project" value="UniProtKB"/>
</dbReference>
<dbReference type="GO" id="GO:0009737">
    <property type="term" value="P:response to abscisic acid"/>
    <property type="evidence" value="ECO:0000270"/>
    <property type="project" value="UniProtKB"/>
</dbReference>
<dbReference type="GO" id="GO:0006970">
    <property type="term" value="P:response to osmotic stress"/>
    <property type="evidence" value="ECO:0000270"/>
    <property type="project" value="UniProtKB"/>
</dbReference>
<dbReference type="GO" id="GO:0009414">
    <property type="term" value="P:response to water deprivation"/>
    <property type="evidence" value="ECO:0000270"/>
    <property type="project" value="UniProtKB"/>
</dbReference>
<dbReference type="CDD" id="cd00018">
    <property type="entry name" value="AP2"/>
    <property type="match status" value="1"/>
</dbReference>
<dbReference type="FunFam" id="3.30.730.10:FF:000001">
    <property type="entry name" value="Ethylene-responsive transcription factor 2"/>
    <property type="match status" value="1"/>
</dbReference>
<dbReference type="Gene3D" id="3.30.730.10">
    <property type="entry name" value="AP2/ERF domain"/>
    <property type="match status" value="1"/>
</dbReference>
<dbReference type="InterPro" id="IPR001471">
    <property type="entry name" value="AP2/ERF_dom"/>
</dbReference>
<dbReference type="InterPro" id="IPR036955">
    <property type="entry name" value="AP2/ERF_dom_sf"/>
</dbReference>
<dbReference type="InterPro" id="IPR050913">
    <property type="entry name" value="AP2/ERF_ERF_subfamily"/>
</dbReference>
<dbReference type="InterPro" id="IPR016177">
    <property type="entry name" value="DNA-bd_dom_sf"/>
</dbReference>
<dbReference type="PANTHER" id="PTHR31194:SF210">
    <property type="entry name" value="OS02G0202000 PROTEIN"/>
    <property type="match status" value="1"/>
</dbReference>
<dbReference type="PANTHER" id="PTHR31194">
    <property type="entry name" value="SHN SHINE , DNA BINDING / TRANSCRIPTION FACTOR"/>
    <property type="match status" value="1"/>
</dbReference>
<dbReference type="Pfam" id="PF00847">
    <property type="entry name" value="AP2"/>
    <property type="match status" value="1"/>
</dbReference>
<dbReference type="PRINTS" id="PR00367">
    <property type="entry name" value="ETHRSPELEMNT"/>
</dbReference>
<dbReference type="SMART" id="SM00380">
    <property type="entry name" value="AP2"/>
    <property type="match status" value="1"/>
</dbReference>
<dbReference type="SUPFAM" id="SSF54171">
    <property type="entry name" value="DNA-binding domain"/>
    <property type="match status" value="1"/>
</dbReference>
<dbReference type="PROSITE" id="PS51032">
    <property type="entry name" value="AP2_ERF"/>
    <property type="match status" value="1"/>
</dbReference>
<proteinExistence type="evidence at transcript level"/>
<evidence type="ECO:0000250" key="1">
    <source>
        <dbReference type="UniProtKB" id="Q9XI33"/>
    </source>
</evidence>
<evidence type="ECO:0000255" key="2">
    <source>
        <dbReference type="PROSITE-ProRule" id="PRU00366"/>
    </source>
</evidence>
<evidence type="ECO:0000256" key="3">
    <source>
        <dbReference type="SAM" id="MobiDB-lite"/>
    </source>
</evidence>
<evidence type="ECO:0000269" key="4">
    <source>
    </source>
</evidence>
<evidence type="ECO:0000303" key="5">
    <source>
    </source>
</evidence>
<evidence type="ECO:0000303" key="6">
    <source>
    </source>
</evidence>
<evidence type="ECO:0000305" key="7"/>
<evidence type="ECO:0000312" key="8">
    <source>
        <dbReference type="EMBL" id="AQK69487.1"/>
    </source>
</evidence>
<evidence type="ECO:0000312" key="9">
    <source>
        <dbReference type="EMBL" id="PWZ21889.1"/>
    </source>
</evidence>
<comment type="function">
    <text evidence="1 4">Promotes cuticle formation by inducing the expression of enzymes involved in wax biosynthesis, particularly promoting very-long-chain waxes formation (PubMed:35696901). Confers drought resistance (PubMed:35696901). Acts as a transcriptional activator binding directly to promoter regions of CER2, CER3.2 and KCS1, wax biosynthesis-related genes (PubMed:35696901). Binds to the GCC-box pathogenesis-related promoter element (By similarity). May be involved in the regulation of gene expression by stress factors and by components of stress signal transduction pathways (By similarity).</text>
</comment>
<comment type="subcellular location">
    <subcellularLocation>
        <location evidence="2">Nucleus</location>
    </subcellularLocation>
</comment>
<comment type="tissue specificity">
    <text evidence="4">Mostly expressed in roots, stems and anthers, and, to a lower extent, in leaves, seeds and silks.</text>
</comment>
<comment type="induction">
    <text evidence="4">Induced by drought, osmotic stress and, transiently by abscisic acid (ABA).</text>
</comment>
<comment type="disruption phenotype">
    <text evidence="4">Reduced amounts of C24/C32 fatty acids, C32/C34 aldehydes, C32/C34 1-alcohols and C31 alkanes in leaves leading to decreased epicuticular wax level and increased cuticle permeability, thus conferring a reduced drought tolerance.</text>
</comment>
<comment type="similarity">
    <text evidence="7">Belongs to the AP2/ERF transcription factor family. ERF subfamily.</text>
</comment>
<sequence>MTENLHSRKMVQPKKFRGVRQRHWGSWVSEIRHPLLKRRVWLGTFETAEEAARAYDEAAVLMSGRNAKTNFPIQRSSTGEPTPAAGRDARSNFSSGSSTTNLSQILSAKLRKCCKAPSPSLTCLRLDPEKSHIGVWQKRAGARADSNWVMTVELNKDAASTDAASQSTSATTAPPATPMDEEERIALQMIEELLSSSSPASPSNGDDQGRFII</sequence>